<sequence length="227" mass="25459">MTDSNRDGAAAHSLHAGVYPGNLFMVVAPSGAGKSTLVNALLSKDPEIRLSISYTTRKPRPGEQDGQHYHFTTVEDFRERHARHEFLESAEVHGNYYGTSRVWIEEQMKIGHDVLLEIDWQGAQQVKKQFRNAVGIFILPPSLAALEERLKKRGQDEPNVITRRLLAAGSEIAHAAEAQYVVINETFEHALAELECIVAATRLRFTSQYARHAELFVELGIHLPHAE</sequence>
<gene>
    <name evidence="1" type="primary">gmk</name>
    <name type="ordered locus">BURPS1710b_3049</name>
</gene>
<feature type="chain" id="PRO_0000266296" description="Guanylate kinase">
    <location>
        <begin position="1"/>
        <end position="227"/>
    </location>
</feature>
<feature type="domain" description="Guanylate kinase-like" evidence="1">
    <location>
        <begin position="21"/>
        <end position="199"/>
    </location>
</feature>
<feature type="binding site" evidence="1">
    <location>
        <begin position="28"/>
        <end position="35"/>
    </location>
    <ligand>
        <name>ATP</name>
        <dbReference type="ChEBI" id="CHEBI:30616"/>
    </ligand>
</feature>
<comment type="function">
    <text evidence="1">Essential for recycling GMP and indirectly, cGMP.</text>
</comment>
<comment type="catalytic activity">
    <reaction evidence="1">
        <text>GMP + ATP = GDP + ADP</text>
        <dbReference type="Rhea" id="RHEA:20780"/>
        <dbReference type="ChEBI" id="CHEBI:30616"/>
        <dbReference type="ChEBI" id="CHEBI:58115"/>
        <dbReference type="ChEBI" id="CHEBI:58189"/>
        <dbReference type="ChEBI" id="CHEBI:456216"/>
        <dbReference type="EC" id="2.7.4.8"/>
    </reaction>
</comment>
<comment type="subcellular location">
    <subcellularLocation>
        <location evidence="1">Cytoplasm</location>
    </subcellularLocation>
</comment>
<comment type="similarity">
    <text evidence="1">Belongs to the guanylate kinase family.</text>
</comment>
<accession>Q3JPS9</accession>
<proteinExistence type="inferred from homology"/>
<protein>
    <recommendedName>
        <fullName evidence="1">Guanylate kinase</fullName>
        <ecNumber evidence="1">2.7.4.8</ecNumber>
    </recommendedName>
    <alternativeName>
        <fullName evidence="1">GMP kinase</fullName>
    </alternativeName>
</protein>
<reference key="1">
    <citation type="journal article" date="2010" name="Genome Biol. Evol.">
        <title>Continuing evolution of Burkholderia mallei through genome reduction and large-scale rearrangements.</title>
        <authorList>
            <person name="Losada L."/>
            <person name="Ronning C.M."/>
            <person name="DeShazer D."/>
            <person name="Woods D."/>
            <person name="Fedorova N."/>
            <person name="Kim H.S."/>
            <person name="Shabalina S.A."/>
            <person name="Pearson T.R."/>
            <person name="Brinkac L."/>
            <person name="Tan P."/>
            <person name="Nandi T."/>
            <person name="Crabtree J."/>
            <person name="Badger J."/>
            <person name="Beckstrom-Sternberg S."/>
            <person name="Saqib M."/>
            <person name="Schutzer S.E."/>
            <person name="Keim P."/>
            <person name="Nierman W.C."/>
        </authorList>
    </citation>
    <scope>NUCLEOTIDE SEQUENCE [LARGE SCALE GENOMIC DNA]</scope>
    <source>
        <strain>1710b</strain>
    </source>
</reference>
<dbReference type="EC" id="2.7.4.8" evidence="1"/>
<dbReference type="EMBL" id="CP000124">
    <property type="protein sequence ID" value="ABA48580.1"/>
    <property type="molecule type" value="Genomic_DNA"/>
</dbReference>
<dbReference type="RefSeq" id="WP_004185877.1">
    <property type="nucleotide sequence ID" value="NC_007434.1"/>
</dbReference>
<dbReference type="SMR" id="Q3JPS9"/>
<dbReference type="EnsemblBacteria" id="ABA48580">
    <property type="protein sequence ID" value="ABA48580"/>
    <property type="gene ID" value="BURPS1710b_3049"/>
</dbReference>
<dbReference type="GeneID" id="93061156"/>
<dbReference type="KEGG" id="bpm:BURPS1710b_3049"/>
<dbReference type="HOGENOM" id="CLU_001715_1_0_4"/>
<dbReference type="Proteomes" id="UP000002700">
    <property type="component" value="Chromosome I"/>
</dbReference>
<dbReference type="GO" id="GO:0005829">
    <property type="term" value="C:cytosol"/>
    <property type="evidence" value="ECO:0007669"/>
    <property type="project" value="TreeGrafter"/>
</dbReference>
<dbReference type="GO" id="GO:0005524">
    <property type="term" value="F:ATP binding"/>
    <property type="evidence" value="ECO:0007669"/>
    <property type="project" value="UniProtKB-UniRule"/>
</dbReference>
<dbReference type="GO" id="GO:0004385">
    <property type="term" value="F:guanylate kinase activity"/>
    <property type="evidence" value="ECO:0007669"/>
    <property type="project" value="UniProtKB-UniRule"/>
</dbReference>
<dbReference type="CDD" id="cd00071">
    <property type="entry name" value="GMPK"/>
    <property type="match status" value="1"/>
</dbReference>
<dbReference type="FunFam" id="3.30.63.10:FF:000002">
    <property type="entry name" value="Guanylate kinase 1"/>
    <property type="match status" value="1"/>
</dbReference>
<dbReference type="Gene3D" id="3.30.63.10">
    <property type="entry name" value="Guanylate Kinase phosphate binding domain"/>
    <property type="match status" value="1"/>
</dbReference>
<dbReference type="Gene3D" id="3.40.50.300">
    <property type="entry name" value="P-loop containing nucleotide triphosphate hydrolases"/>
    <property type="match status" value="1"/>
</dbReference>
<dbReference type="HAMAP" id="MF_00328">
    <property type="entry name" value="Guanylate_kinase"/>
    <property type="match status" value="1"/>
</dbReference>
<dbReference type="InterPro" id="IPR008145">
    <property type="entry name" value="GK/Ca_channel_bsu"/>
</dbReference>
<dbReference type="InterPro" id="IPR008144">
    <property type="entry name" value="Guanylate_kin-like_dom"/>
</dbReference>
<dbReference type="InterPro" id="IPR017665">
    <property type="entry name" value="Guanylate_kinase"/>
</dbReference>
<dbReference type="InterPro" id="IPR020590">
    <property type="entry name" value="Guanylate_kinase_CS"/>
</dbReference>
<dbReference type="InterPro" id="IPR027417">
    <property type="entry name" value="P-loop_NTPase"/>
</dbReference>
<dbReference type="NCBIfam" id="TIGR03263">
    <property type="entry name" value="guanyl_kin"/>
    <property type="match status" value="1"/>
</dbReference>
<dbReference type="PANTHER" id="PTHR23117:SF13">
    <property type="entry name" value="GUANYLATE KINASE"/>
    <property type="match status" value="1"/>
</dbReference>
<dbReference type="PANTHER" id="PTHR23117">
    <property type="entry name" value="GUANYLATE KINASE-RELATED"/>
    <property type="match status" value="1"/>
</dbReference>
<dbReference type="Pfam" id="PF00625">
    <property type="entry name" value="Guanylate_kin"/>
    <property type="match status" value="1"/>
</dbReference>
<dbReference type="SMART" id="SM00072">
    <property type="entry name" value="GuKc"/>
    <property type="match status" value="1"/>
</dbReference>
<dbReference type="SUPFAM" id="SSF52540">
    <property type="entry name" value="P-loop containing nucleoside triphosphate hydrolases"/>
    <property type="match status" value="1"/>
</dbReference>
<dbReference type="PROSITE" id="PS00856">
    <property type="entry name" value="GUANYLATE_KINASE_1"/>
    <property type="match status" value="1"/>
</dbReference>
<dbReference type="PROSITE" id="PS50052">
    <property type="entry name" value="GUANYLATE_KINASE_2"/>
    <property type="match status" value="1"/>
</dbReference>
<evidence type="ECO:0000255" key="1">
    <source>
        <dbReference type="HAMAP-Rule" id="MF_00328"/>
    </source>
</evidence>
<name>KGUA_BURP1</name>
<organism>
    <name type="scientific">Burkholderia pseudomallei (strain 1710b)</name>
    <dbReference type="NCBI Taxonomy" id="320372"/>
    <lineage>
        <taxon>Bacteria</taxon>
        <taxon>Pseudomonadati</taxon>
        <taxon>Pseudomonadota</taxon>
        <taxon>Betaproteobacteria</taxon>
        <taxon>Burkholderiales</taxon>
        <taxon>Burkholderiaceae</taxon>
        <taxon>Burkholderia</taxon>
        <taxon>pseudomallei group</taxon>
    </lineage>
</organism>
<keyword id="KW-0067">ATP-binding</keyword>
<keyword id="KW-0963">Cytoplasm</keyword>
<keyword id="KW-0418">Kinase</keyword>
<keyword id="KW-0547">Nucleotide-binding</keyword>
<keyword id="KW-0808">Transferase</keyword>